<keyword id="KW-0002">3D-structure</keyword>
<keyword id="KW-0378">Hydrolase</keyword>
<keyword id="KW-0549">Nylon degradation</keyword>
<keyword id="KW-0614">Plasmid</keyword>
<accession>P07062</accession>
<gene>
    <name evidence="7" type="primary">nylB'</name>
</gene>
<feature type="chain" id="PRO_0000058012" description="6-aminohexanoate-dimer hydrolase">
    <location>
        <begin position="1"/>
        <end position="392"/>
    </location>
</feature>
<feature type="region of interest" description="Disordered" evidence="2">
    <location>
        <begin position="1"/>
        <end position="27"/>
    </location>
</feature>
<feature type="active site" evidence="1">
    <location>
        <position position="112"/>
    </location>
</feature>
<feature type="mutagenesis site" description="Enhances activity." evidence="3">
    <original>G</original>
    <variation>D</variation>
    <location>
        <position position="181"/>
    </location>
</feature>
<feature type="mutagenesis site" description="Enhances activity." evidence="3">
    <original>H</original>
    <variation>N</variation>
    <location>
        <position position="266"/>
    </location>
</feature>
<feature type="turn" evidence="10">
    <location>
        <begin position="23"/>
        <end position="27"/>
    </location>
</feature>
<feature type="turn" evidence="11">
    <location>
        <begin position="29"/>
        <end position="31"/>
    </location>
</feature>
<feature type="helix" evidence="11">
    <location>
        <begin position="32"/>
        <end position="35"/>
    </location>
</feature>
<feature type="helix" evidence="11">
    <location>
        <begin position="39"/>
        <end position="41"/>
    </location>
</feature>
<feature type="strand" evidence="11">
    <location>
        <begin position="60"/>
        <end position="62"/>
    </location>
</feature>
<feature type="helix" evidence="11">
    <location>
        <begin position="66"/>
        <end position="69"/>
    </location>
</feature>
<feature type="helix" evidence="11">
    <location>
        <begin position="73"/>
        <end position="79"/>
    </location>
</feature>
<feature type="strand" evidence="11">
    <location>
        <begin position="82"/>
        <end position="89"/>
    </location>
</feature>
<feature type="strand" evidence="11">
    <location>
        <begin position="92"/>
        <end position="98"/>
    </location>
</feature>
<feature type="helix" evidence="11">
    <location>
        <begin position="113"/>
        <end position="127"/>
    </location>
</feature>
<feature type="helix" evidence="11">
    <location>
        <begin position="137"/>
        <end position="140"/>
    </location>
</feature>
<feature type="helix" evidence="11">
    <location>
        <begin position="142"/>
        <end position="144"/>
    </location>
</feature>
<feature type="helix" evidence="11">
    <location>
        <begin position="154"/>
        <end position="158"/>
    </location>
</feature>
<feature type="helix" evidence="11">
    <location>
        <begin position="176"/>
        <end position="180"/>
    </location>
</feature>
<feature type="helix" evidence="10">
    <location>
        <begin position="197"/>
        <end position="202"/>
    </location>
</feature>
<feature type="strand" evidence="11">
    <location>
        <begin position="210"/>
        <end position="212"/>
    </location>
</feature>
<feature type="helix" evidence="11">
    <location>
        <begin position="217"/>
        <end position="231"/>
    </location>
</feature>
<feature type="helix" evidence="11">
    <location>
        <begin position="235"/>
        <end position="242"/>
    </location>
</feature>
<feature type="helix" evidence="11">
    <location>
        <begin position="244"/>
        <end position="246"/>
    </location>
</feature>
<feature type="turn" evidence="10">
    <location>
        <begin position="265"/>
        <end position="267"/>
    </location>
</feature>
<feature type="strand" evidence="10">
    <location>
        <begin position="269"/>
        <end position="271"/>
    </location>
</feature>
<feature type="helix" evidence="10">
    <location>
        <begin position="273"/>
        <end position="284"/>
    </location>
</feature>
<feature type="turn" evidence="10">
    <location>
        <begin position="285"/>
        <end position="287"/>
    </location>
</feature>
<feature type="helix" evidence="11">
    <location>
        <begin position="297"/>
        <end position="305"/>
    </location>
</feature>
<feature type="helix" evidence="11">
    <location>
        <begin position="309"/>
        <end position="311"/>
    </location>
</feature>
<feature type="helix" evidence="11">
    <location>
        <begin position="315"/>
        <end position="318"/>
    </location>
</feature>
<feature type="strand" evidence="11">
    <location>
        <begin position="325"/>
        <end position="327"/>
    </location>
</feature>
<feature type="strand" evidence="11">
    <location>
        <begin position="330"/>
        <end position="332"/>
    </location>
</feature>
<feature type="strand" evidence="11">
    <location>
        <begin position="340"/>
        <end position="344"/>
    </location>
</feature>
<feature type="turn" evidence="11">
    <location>
        <begin position="345"/>
        <end position="347"/>
    </location>
</feature>
<feature type="strand" evidence="11">
    <location>
        <begin position="348"/>
        <end position="353"/>
    </location>
</feature>
<feature type="helix" evidence="11">
    <location>
        <begin position="354"/>
        <end position="356"/>
    </location>
</feature>
<feature type="strand" evidence="11">
    <location>
        <begin position="358"/>
        <end position="364"/>
    </location>
</feature>
<feature type="strand" evidence="11">
    <location>
        <begin position="367"/>
        <end position="369"/>
    </location>
</feature>
<feature type="helix" evidence="11">
    <location>
        <begin position="372"/>
        <end position="388"/>
    </location>
</feature>
<protein>
    <recommendedName>
        <fullName evidence="6">6-aminohexanoate-dimer hydrolase</fullName>
        <ecNumber evidence="8">3.5.1.46</ecNumber>
    </recommendedName>
    <alternativeName>
        <fullName evidence="7">6-aminohexanoic acid linear oligomer hydrolase</fullName>
    </alternativeName>
    <alternativeName>
        <fullName>Nylon oligomers-degrading enzyme EII'</fullName>
    </alternativeName>
</protein>
<sequence>MNTPTTGSHPARYPSAAAGEPTLDSWQEPPHNRWAFAHLGEMVPSAAVSRRPVNAPGHALARLGAIAAQLPDLEQRLEQTYTDAFLVLRGTEVVAEYYRAGFAPDDRHLLMSVSKSLCGTVVGALVDEGRIDPAQPVTEYVPELAGSVYDGPSVLQVLDMQISIDYNEDYVDPASEVQTHGRSAGWRTRATGDPADTYEFLTTLRGDGSTGEFQYCSANTDVLAWIVERVTGLRYVEALSTYLWAKLDADRDATITVDTTGFGFAHGGVSCTARDLARVGRMMLDGGVAPGGRVVSEDWVRRVLAGGSHEAMTDKGFTNTFPDGSYTRQWWCTGNERGNVSGIGIHGQNLWLDPLTDSVIVKLSSWPDPDTEHWHRLQNGILLDVSRALDAV</sequence>
<reference key="1">
    <citation type="journal article" date="1983" name="Nature">
        <title>Evolutionary adaptation of plasmid-encoded enzymes for degrading nylon oligomers.</title>
        <authorList>
            <person name="Okada H."/>
            <person name="Negoro S."/>
            <person name="Kimura H."/>
            <person name="Nakamura S."/>
        </authorList>
    </citation>
    <scope>NUCLEOTIDE SEQUENCE [GENOMIC DNA]</scope>
    <scope>FUNCTION</scope>
    <scope>PATHWAY</scope>
    <source>
        <strain>K172</strain>
    </source>
</reference>
<reference key="2">
    <citation type="journal article" date="1984" name="J. Biol. Chem.">
        <title>Construction of hybrid genes of 6-aminohexanoic acid-oligomer hydrolase and its analogous enzyme. Estimation of the intramolecular regions important for the enzyme evolution.</title>
        <authorList>
            <person name="Negoro S."/>
            <person name="Nakamura S."/>
            <person name="Kimura H."/>
            <person name="Fujiyama K."/>
            <person name="Zhang Y.Z."/>
            <person name="Kanzaki N."/>
            <person name="Okada H."/>
        </authorList>
    </citation>
    <scope>NUCLEOTIDE SEQUENCE [GENOMIC DNA]</scope>
    <scope>FUNCTION</scope>
</reference>
<reference key="3">
    <citation type="journal article" date="1991" name="Eur. J. Biochem.">
        <title>Amino acid alterations essential for increasing the catalytic activity of the nylon-oligomer-degradation enzyme of Flavobacterium sp.</title>
        <authorList>
            <person name="Kato K."/>
            <person name="Fujiyama K."/>
            <person name="Hatanaka H.S."/>
            <person name="Priyambada I.D."/>
            <person name="Negoro S."/>
            <person name="Urabe I."/>
            <person name="Okada H."/>
        </authorList>
    </citation>
    <scope>MUTAGENESIS</scope>
</reference>
<proteinExistence type="evidence at protein level"/>
<evidence type="ECO:0000250" key="1">
    <source>
        <dbReference type="UniProtKB" id="P07061"/>
    </source>
</evidence>
<evidence type="ECO:0000256" key="2">
    <source>
        <dbReference type="SAM" id="MobiDB-lite"/>
    </source>
</evidence>
<evidence type="ECO:0000269" key="3">
    <source>
    </source>
</evidence>
<evidence type="ECO:0000269" key="4">
    <source>
    </source>
</evidence>
<evidence type="ECO:0000269" key="5">
    <source>
    </source>
</evidence>
<evidence type="ECO:0000303" key="6">
    <source>
    </source>
</evidence>
<evidence type="ECO:0000303" key="7">
    <source>
    </source>
</evidence>
<evidence type="ECO:0000305" key="8">
    <source>
    </source>
</evidence>
<evidence type="ECO:0000305" key="9">
    <source>
    </source>
</evidence>
<evidence type="ECO:0007829" key="10">
    <source>
        <dbReference type="PDB" id="2DCF"/>
    </source>
</evidence>
<evidence type="ECO:0007829" key="11">
    <source>
        <dbReference type="PDB" id="3VWN"/>
    </source>
</evidence>
<geneLocation type="plasmid">
    <name>pOAD2</name>
</geneLocation>
<organism>
    <name type="scientific">Paenarthrobacter ureafaciens</name>
    <dbReference type="NCBI Taxonomy" id="37931"/>
    <lineage>
        <taxon>Bacteria</taxon>
        <taxon>Bacillati</taxon>
        <taxon>Actinomycetota</taxon>
        <taxon>Actinomycetes</taxon>
        <taxon>Micrococcales</taxon>
        <taxon>Micrococcaceae</taxon>
        <taxon>Paenarthrobacter</taxon>
    </lineage>
</organism>
<comment type="function">
    <text evidence="4 5">Involved in nylon oligomer degradation.</text>
</comment>
<comment type="catalytic activity">
    <reaction evidence="8">
        <text>[N-(6-aminohexanoyl)](n) + H2O = [N-(6-aminohexanoyl)](n-1) + 6-aminohexanoate</text>
        <dbReference type="Rhea" id="RHEA:18225"/>
        <dbReference type="Rhea" id="RHEA-COMP:9820"/>
        <dbReference type="Rhea" id="RHEA-COMP:14302"/>
        <dbReference type="ChEBI" id="CHEBI:15377"/>
        <dbReference type="ChEBI" id="CHEBI:57826"/>
        <dbReference type="ChEBI" id="CHEBI:78629"/>
        <dbReference type="EC" id="3.5.1.46"/>
    </reaction>
</comment>
<comment type="catalytic activity">
    <reaction evidence="8">
        <text>N-(6-aminohexanoyl)-6-aminohexanoate + H2O = 2 6-aminohexanoate</text>
        <dbReference type="Rhea" id="RHEA:21364"/>
        <dbReference type="ChEBI" id="CHEBI:15377"/>
        <dbReference type="ChEBI" id="CHEBI:57826"/>
        <dbReference type="ChEBI" id="CHEBI:58798"/>
        <dbReference type="EC" id="3.5.1.46"/>
    </reaction>
</comment>
<comment type="pathway">
    <text evidence="9">Xenobiotic degradation; nylon-6 oligomer degradation.</text>
</comment>
<comment type="miscellaneous">
    <text evidence="5">The EII enzyme is 100 times more active toward the substrate than the EII' enzyme.</text>
</comment>
<dbReference type="EC" id="3.5.1.46" evidence="8"/>
<dbReference type="EMBL" id="X02864">
    <property type="protein sequence ID" value="CAA26616.1"/>
    <property type="molecule type" value="Genomic_DNA"/>
</dbReference>
<dbReference type="PDB" id="1WYB">
    <property type="method" value="X-ray"/>
    <property type="resolution" value="1.80 A"/>
    <property type="chains" value="A=6-392"/>
</dbReference>
<dbReference type="PDB" id="1WYC">
    <property type="method" value="X-ray"/>
    <property type="resolution" value="1.58 A"/>
    <property type="chains" value="A=9-392"/>
</dbReference>
<dbReference type="PDB" id="2DCF">
    <property type="method" value="X-ray"/>
    <property type="resolution" value="1.40 A"/>
    <property type="chains" value="A=9-392"/>
</dbReference>
<dbReference type="PDB" id="2E8I">
    <property type="method" value="X-ray"/>
    <property type="resolution" value="1.45 A"/>
    <property type="chains" value="A=22-392"/>
</dbReference>
<dbReference type="PDB" id="2ZLY">
    <property type="method" value="X-ray"/>
    <property type="resolution" value="1.58 A"/>
    <property type="chains" value="A=22-392"/>
</dbReference>
<dbReference type="PDB" id="2ZM0">
    <property type="method" value="X-ray"/>
    <property type="resolution" value="1.50 A"/>
    <property type="chains" value="A=22-392"/>
</dbReference>
<dbReference type="PDB" id="2ZM2">
    <property type="method" value="X-ray"/>
    <property type="resolution" value="1.55 A"/>
    <property type="chains" value="A=22-392"/>
</dbReference>
<dbReference type="PDB" id="2ZM7">
    <property type="method" value="X-ray"/>
    <property type="resolution" value="1.60 A"/>
    <property type="chains" value="A=22-392"/>
</dbReference>
<dbReference type="PDB" id="2ZM8">
    <property type="method" value="X-ray"/>
    <property type="resolution" value="1.55 A"/>
    <property type="chains" value="A=22-392"/>
</dbReference>
<dbReference type="PDB" id="2ZM9">
    <property type="method" value="X-ray"/>
    <property type="resolution" value="1.50 A"/>
    <property type="chains" value="A=22-392"/>
</dbReference>
<dbReference type="PDB" id="2ZMA">
    <property type="method" value="X-ray"/>
    <property type="resolution" value="1.51 A"/>
    <property type="chains" value="A=22-392"/>
</dbReference>
<dbReference type="PDB" id="3A65">
    <property type="method" value="X-ray"/>
    <property type="resolution" value="1.70 A"/>
    <property type="chains" value="A=22-392"/>
</dbReference>
<dbReference type="PDB" id="3A66">
    <property type="method" value="X-ray"/>
    <property type="resolution" value="1.60 A"/>
    <property type="chains" value="A=22-392"/>
</dbReference>
<dbReference type="PDB" id="3VWL">
    <property type="method" value="X-ray"/>
    <property type="resolution" value="1.60 A"/>
    <property type="chains" value="A=22-392"/>
</dbReference>
<dbReference type="PDB" id="3VWM">
    <property type="method" value="X-ray"/>
    <property type="resolution" value="1.60 A"/>
    <property type="chains" value="A=22-392"/>
</dbReference>
<dbReference type="PDB" id="3VWN">
    <property type="method" value="X-ray"/>
    <property type="resolution" value="1.20 A"/>
    <property type="chains" value="X=22-392"/>
</dbReference>
<dbReference type="PDB" id="3VWP">
    <property type="method" value="X-ray"/>
    <property type="resolution" value="1.55 A"/>
    <property type="chains" value="A=22-392"/>
</dbReference>
<dbReference type="PDB" id="3VWQ">
    <property type="method" value="X-ray"/>
    <property type="resolution" value="1.70 A"/>
    <property type="chains" value="A=22-392"/>
</dbReference>
<dbReference type="PDB" id="3VWR">
    <property type="method" value="X-ray"/>
    <property type="resolution" value="1.65 A"/>
    <property type="chains" value="A=22-392"/>
</dbReference>
<dbReference type="PDBsum" id="1WYB"/>
<dbReference type="PDBsum" id="1WYC"/>
<dbReference type="PDBsum" id="2DCF"/>
<dbReference type="PDBsum" id="2E8I"/>
<dbReference type="PDBsum" id="2ZLY"/>
<dbReference type="PDBsum" id="2ZM0"/>
<dbReference type="PDBsum" id="2ZM2"/>
<dbReference type="PDBsum" id="2ZM7"/>
<dbReference type="PDBsum" id="2ZM8"/>
<dbReference type="PDBsum" id="2ZM9"/>
<dbReference type="PDBsum" id="2ZMA"/>
<dbReference type="PDBsum" id="3A65"/>
<dbReference type="PDBsum" id="3A66"/>
<dbReference type="PDBsum" id="3VWL"/>
<dbReference type="PDBsum" id="3VWM"/>
<dbReference type="PDBsum" id="3VWN"/>
<dbReference type="PDBsum" id="3VWP"/>
<dbReference type="PDBsum" id="3VWQ"/>
<dbReference type="PDBsum" id="3VWR"/>
<dbReference type="SMR" id="P07062"/>
<dbReference type="BRENDA" id="3.5.1.117">
    <property type="organism ID" value="460"/>
</dbReference>
<dbReference type="BRENDA" id="3.5.1.46">
    <property type="organism ID" value="2302"/>
</dbReference>
<dbReference type="UniPathway" id="UPA00207"/>
<dbReference type="EvolutionaryTrace" id="P07062"/>
<dbReference type="GO" id="GO:0019875">
    <property type="term" value="F:6-aminohexanoate-dimer hydrolase activity"/>
    <property type="evidence" value="ECO:0007669"/>
    <property type="project" value="UniProtKB-EC"/>
</dbReference>
<dbReference type="GO" id="GO:0019876">
    <property type="term" value="P:nylon catabolic process"/>
    <property type="evidence" value="ECO:0007669"/>
    <property type="project" value="UniProtKB-KW"/>
</dbReference>
<dbReference type="FunFam" id="3.40.710.10:FF:000175">
    <property type="entry name" value="6-aminohexanoate-dimer hydrolase"/>
    <property type="match status" value="2"/>
</dbReference>
<dbReference type="Gene3D" id="3.40.710.10">
    <property type="entry name" value="DD-peptidase/beta-lactamase superfamily"/>
    <property type="match status" value="1"/>
</dbReference>
<dbReference type="InterPro" id="IPR001466">
    <property type="entry name" value="Beta-lactam-related"/>
</dbReference>
<dbReference type="InterPro" id="IPR012338">
    <property type="entry name" value="Beta-lactam/transpept-like"/>
</dbReference>
<dbReference type="InterPro" id="IPR050789">
    <property type="entry name" value="Diverse_Enzym_Activities"/>
</dbReference>
<dbReference type="PANTHER" id="PTHR43283">
    <property type="entry name" value="BETA-LACTAMASE-RELATED"/>
    <property type="match status" value="1"/>
</dbReference>
<dbReference type="PANTHER" id="PTHR43283:SF7">
    <property type="entry name" value="BETA-LACTAMASE-RELATED DOMAIN-CONTAINING PROTEIN"/>
    <property type="match status" value="1"/>
</dbReference>
<dbReference type="Pfam" id="PF00144">
    <property type="entry name" value="Beta-lactamase"/>
    <property type="match status" value="1"/>
</dbReference>
<dbReference type="SUPFAM" id="SSF56601">
    <property type="entry name" value="beta-lactamase/transpeptidase-like"/>
    <property type="match status" value="1"/>
</dbReference>
<name>NYLB2_PAEUR</name>